<reference key="1">
    <citation type="journal article" date="2000" name="Proc. Natl. Acad. Sci. U.S.A.">
        <title>Archaeal adaptation to higher temperatures revealed by genomic sequence of Thermoplasma volcanium.</title>
        <authorList>
            <person name="Kawashima T."/>
            <person name="Amano N."/>
            <person name="Koike H."/>
            <person name="Makino S."/>
            <person name="Higuchi S."/>
            <person name="Kawashima-Ohya Y."/>
            <person name="Watanabe K."/>
            <person name="Yamazaki M."/>
            <person name="Kanehori K."/>
            <person name="Kawamoto T."/>
            <person name="Nunoshiba T."/>
            <person name="Yamamoto Y."/>
            <person name="Aramaki H."/>
            <person name="Makino K."/>
            <person name="Suzuki M."/>
        </authorList>
    </citation>
    <scope>NUCLEOTIDE SEQUENCE [LARGE SCALE GENOMIC DNA]</scope>
    <source>
        <strain>ATCC 51530 / DSM 4299 / JCM 9571 / NBRC 15438 / GSS1</strain>
    </source>
</reference>
<dbReference type="EMBL" id="BA000011">
    <property type="protein sequence ID" value="BAB60227.1"/>
    <property type="molecule type" value="Genomic_DNA"/>
</dbReference>
<dbReference type="RefSeq" id="WP_010917316.1">
    <property type="nucleotide sequence ID" value="NC_002689.2"/>
</dbReference>
<dbReference type="PDB" id="4Z9E">
    <property type="method" value="X-ray"/>
    <property type="resolution" value="2.49 A"/>
    <property type="chains" value="A/B/C/D=1-89"/>
</dbReference>
<dbReference type="PDBsum" id="4Z9E"/>
<dbReference type="SMR" id="Q979S5"/>
<dbReference type="STRING" id="273116.gene:9381881"/>
<dbReference type="PaxDb" id="273116-14325323"/>
<dbReference type="GeneID" id="1441198"/>
<dbReference type="KEGG" id="tvo:TVG1115434"/>
<dbReference type="eggNOG" id="arCOG01753">
    <property type="taxonomic scope" value="Archaea"/>
</dbReference>
<dbReference type="HOGENOM" id="CLU_110989_1_0_2"/>
<dbReference type="OrthoDB" id="10360at2157"/>
<dbReference type="PhylomeDB" id="Q979S5"/>
<dbReference type="EvolutionaryTrace" id="Q979S5"/>
<dbReference type="Proteomes" id="UP000001017">
    <property type="component" value="Chromosome"/>
</dbReference>
<dbReference type="GO" id="GO:0005694">
    <property type="term" value="C:chromosome"/>
    <property type="evidence" value="ECO:0007669"/>
    <property type="project" value="UniProtKB-SubCell"/>
</dbReference>
<dbReference type="GO" id="GO:0005737">
    <property type="term" value="C:cytoplasm"/>
    <property type="evidence" value="ECO:0007669"/>
    <property type="project" value="UniProtKB-SubCell"/>
</dbReference>
<dbReference type="GO" id="GO:0003690">
    <property type="term" value="F:double-stranded DNA binding"/>
    <property type="evidence" value="ECO:0007669"/>
    <property type="project" value="UniProtKB-UniRule"/>
</dbReference>
<dbReference type="GO" id="GO:0003723">
    <property type="term" value="F:RNA binding"/>
    <property type="evidence" value="ECO:0007669"/>
    <property type="project" value="InterPro"/>
</dbReference>
<dbReference type="GO" id="GO:0030261">
    <property type="term" value="P:chromosome condensation"/>
    <property type="evidence" value="ECO:0007669"/>
    <property type="project" value="UniProtKB-KW"/>
</dbReference>
<dbReference type="Gene3D" id="3.30.110.20">
    <property type="entry name" value="Alba-like domain"/>
    <property type="match status" value="1"/>
</dbReference>
<dbReference type="HAMAP" id="MF_01122">
    <property type="entry name" value="AlbA"/>
    <property type="match status" value="1"/>
</dbReference>
<dbReference type="InterPro" id="IPR036882">
    <property type="entry name" value="Alba-like_dom_sf"/>
</dbReference>
<dbReference type="InterPro" id="IPR013795">
    <property type="entry name" value="DNA/RNA-bd_Alba"/>
</dbReference>
<dbReference type="InterPro" id="IPR002775">
    <property type="entry name" value="DNA/RNA-bd_Alba-like"/>
</dbReference>
<dbReference type="NCBIfam" id="TIGR00285">
    <property type="entry name" value="DNA-binding protein Alba"/>
    <property type="match status" value="1"/>
</dbReference>
<dbReference type="NCBIfam" id="NF003088">
    <property type="entry name" value="PRK04015.1"/>
    <property type="match status" value="1"/>
</dbReference>
<dbReference type="Pfam" id="PF01918">
    <property type="entry name" value="Alba"/>
    <property type="match status" value="1"/>
</dbReference>
<dbReference type="PIRSF" id="PIRSF028732">
    <property type="entry name" value="Alba"/>
    <property type="match status" value="1"/>
</dbReference>
<dbReference type="SUPFAM" id="SSF82704">
    <property type="entry name" value="AlbA-like"/>
    <property type="match status" value="1"/>
</dbReference>
<organism>
    <name type="scientific">Thermoplasma volcanium (strain ATCC 51530 / DSM 4299 / JCM 9571 / NBRC 15438 / GSS1)</name>
    <dbReference type="NCBI Taxonomy" id="273116"/>
    <lineage>
        <taxon>Archaea</taxon>
        <taxon>Methanobacteriati</taxon>
        <taxon>Thermoplasmatota</taxon>
        <taxon>Thermoplasmata</taxon>
        <taxon>Thermoplasmatales</taxon>
        <taxon>Thermoplasmataceae</taxon>
        <taxon>Thermoplasma</taxon>
    </lineage>
</organism>
<accession>Q979S5</accession>
<name>ALBA_THEVO</name>
<evidence type="ECO:0000255" key="1">
    <source>
        <dbReference type="HAMAP-Rule" id="MF_01122"/>
    </source>
</evidence>
<evidence type="ECO:0007829" key="2">
    <source>
        <dbReference type="PDB" id="4Z9E"/>
    </source>
</evidence>
<sequence length="89" mass="9966">MAEENIIFVGKKPTMNYVLAVVTQFNNNANKIIIKARGKTISKAVDVAEITRHKFIPDAKYEEIRLDTETLQGERGSSNVSSIEITLSR</sequence>
<keyword id="KW-0002">3D-structure</keyword>
<keyword id="KW-0007">Acetylation</keyword>
<keyword id="KW-0158">Chromosome</keyword>
<keyword id="KW-0963">Cytoplasm</keyword>
<keyword id="KW-0226">DNA condensation</keyword>
<keyword id="KW-0238">DNA-binding</keyword>
<proteinExistence type="evidence at protein level"/>
<gene>
    <name evidence="1" type="primary">albA</name>
    <name type="ordered locus">TV1085</name>
    <name type="ORF">TVG1115434</name>
</gene>
<protein>
    <recommendedName>
        <fullName evidence="1">DNA/RNA-binding protein Alba</fullName>
    </recommendedName>
</protein>
<feature type="chain" id="PRO_0000151717" description="DNA/RNA-binding protein Alba">
    <location>
        <begin position="1"/>
        <end position="89"/>
    </location>
</feature>
<feature type="modified residue" description="N6-acetyllysine" evidence="1">
    <location>
        <position position="11"/>
    </location>
</feature>
<feature type="strand" evidence="2">
    <location>
        <begin position="6"/>
        <end position="8"/>
    </location>
</feature>
<feature type="helix" evidence="2">
    <location>
        <begin position="14"/>
        <end position="25"/>
    </location>
</feature>
<feature type="turn" evidence="2">
    <location>
        <begin position="26"/>
        <end position="28"/>
    </location>
</feature>
<feature type="strand" evidence="2">
    <location>
        <begin position="30"/>
        <end position="37"/>
    </location>
</feature>
<feature type="helix" evidence="2">
    <location>
        <begin position="38"/>
        <end position="40"/>
    </location>
</feature>
<feature type="helix" evidence="2">
    <location>
        <begin position="41"/>
        <end position="54"/>
    </location>
</feature>
<feature type="strand" evidence="2">
    <location>
        <begin position="60"/>
        <end position="69"/>
    </location>
</feature>
<feature type="strand" evidence="2">
    <location>
        <begin position="80"/>
        <end position="88"/>
    </location>
</feature>
<comment type="function">
    <text evidence="1">Binds double-stranded DNA tightly but without sequence specificity. Involved in DNA compaction.</text>
</comment>
<comment type="subcellular location">
    <subcellularLocation>
        <location evidence="1">Cytoplasm</location>
    </subcellularLocation>
    <subcellularLocation>
        <location evidence="1">Chromosome</location>
    </subcellularLocation>
</comment>
<comment type="PTM">
    <text evidence="1">Acetylated. Acetylation at Lys-11 decreases DNA-binding affinity.</text>
</comment>
<comment type="similarity">
    <text evidence="1">Belongs to the histone-like Alba family.</text>
</comment>